<keyword id="KW-0963">Cytoplasm</keyword>
<keyword id="KW-0489">Methyltransferase</keyword>
<keyword id="KW-0949">S-adenosyl-L-methionine</keyword>
<keyword id="KW-0808">Transferase</keyword>
<keyword id="KW-0819">tRNA processing</keyword>
<protein>
    <recommendedName>
        <fullName evidence="1">tRNA (pseudouridine(54)-N(1))-methyltransferase</fullName>
        <ecNumber evidence="1">2.1.1.257</ecNumber>
    </recommendedName>
</protein>
<dbReference type="EC" id="2.1.1.257" evidence="1"/>
<dbReference type="EMBL" id="AE008384">
    <property type="protein sequence ID" value="AAM32230.1"/>
    <property type="molecule type" value="Genomic_DNA"/>
</dbReference>
<dbReference type="RefSeq" id="WP_011034450.1">
    <property type="nucleotide sequence ID" value="NC_003901.1"/>
</dbReference>
<dbReference type="SMR" id="Q8PU23"/>
<dbReference type="GeneID" id="82161613"/>
<dbReference type="KEGG" id="mma:MM_2534"/>
<dbReference type="PATRIC" id="fig|192952.21.peg.2905"/>
<dbReference type="eggNOG" id="arCOG01239">
    <property type="taxonomic scope" value="Archaea"/>
</dbReference>
<dbReference type="HOGENOM" id="CLU_107018_0_0_2"/>
<dbReference type="Proteomes" id="UP000000595">
    <property type="component" value="Chromosome"/>
</dbReference>
<dbReference type="GO" id="GO:0005737">
    <property type="term" value="C:cytoplasm"/>
    <property type="evidence" value="ECO:0007669"/>
    <property type="project" value="UniProtKB-SubCell"/>
</dbReference>
<dbReference type="GO" id="GO:0008757">
    <property type="term" value="F:S-adenosylmethionine-dependent methyltransferase activity"/>
    <property type="evidence" value="ECO:0007669"/>
    <property type="project" value="UniProtKB-UniRule"/>
</dbReference>
<dbReference type="GO" id="GO:0008175">
    <property type="term" value="F:tRNA methyltransferase activity"/>
    <property type="evidence" value="ECO:0007669"/>
    <property type="project" value="UniProtKB-UniRule"/>
</dbReference>
<dbReference type="GO" id="GO:0030488">
    <property type="term" value="P:tRNA methylation"/>
    <property type="evidence" value="ECO:0007669"/>
    <property type="project" value="UniProtKB-UniRule"/>
</dbReference>
<dbReference type="CDD" id="cd18087">
    <property type="entry name" value="TrmY-like"/>
    <property type="match status" value="1"/>
</dbReference>
<dbReference type="Gene3D" id="3.40.1280.10">
    <property type="match status" value="1"/>
</dbReference>
<dbReference type="HAMAP" id="MF_00587">
    <property type="entry name" value="tRNA_methyltr_TrmY"/>
    <property type="match status" value="1"/>
</dbReference>
<dbReference type="InterPro" id="IPR029028">
    <property type="entry name" value="Alpha/beta_knot_MTases"/>
</dbReference>
<dbReference type="InterPro" id="IPR007158">
    <property type="entry name" value="TrmY"/>
</dbReference>
<dbReference type="InterPro" id="IPR029026">
    <property type="entry name" value="tRNA_m1G_MTases_N"/>
</dbReference>
<dbReference type="NCBIfam" id="NF002560">
    <property type="entry name" value="PRK02135.1"/>
    <property type="match status" value="1"/>
</dbReference>
<dbReference type="PANTHER" id="PTHR40703">
    <property type="entry name" value="TRNA (PSEUDOURIDINE(54)-N(1))-METHYLTRANSFERASE"/>
    <property type="match status" value="1"/>
</dbReference>
<dbReference type="PANTHER" id="PTHR40703:SF1">
    <property type="entry name" value="TRNA (PSEUDOURIDINE(54)-N(1))-METHYLTRANSFERASE"/>
    <property type="match status" value="1"/>
</dbReference>
<dbReference type="Pfam" id="PF04013">
    <property type="entry name" value="Methyltrn_RNA_2"/>
    <property type="match status" value="1"/>
</dbReference>
<dbReference type="SUPFAM" id="SSF75217">
    <property type="entry name" value="alpha/beta knot"/>
    <property type="match status" value="1"/>
</dbReference>
<gene>
    <name evidence="1" type="primary">trmY</name>
    <name type="ordered locus">MM_2534</name>
</gene>
<feature type="chain" id="PRO_0000157950" description="tRNA (pseudouridine(54)-N(1))-methyltransferase">
    <location>
        <begin position="1"/>
        <end position="211"/>
    </location>
</feature>
<feature type="binding site" evidence="1">
    <location>
        <position position="128"/>
    </location>
    <ligand>
        <name>S-adenosyl-L-methionine</name>
        <dbReference type="ChEBI" id="CHEBI:59789"/>
    </ligand>
</feature>
<feature type="binding site" evidence="1">
    <location>
        <position position="150"/>
    </location>
    <ligand>
        <name>S-adenosyl-L-methionine</name>
        <dbReference type="ChEBI" id="CHEBI:59789"/>
    </ligand>
</feature>
<feature type="binding site" evidence="1">
    <location>
        <position position="183"/>
    </location>
    <ligand>
        <name>S-adenosyl-L-methionine</name>
        <dbReference type="ChEBI" id="CHEBI:59789"/>
    </ligand>
</feature>
<proteinExistence type="inferred from homology"/>
<comment type="function">
    <text evidence="1">Specifically catalyzes the N1-methylation of pseudouridine at position 54 (Psi54) in tRNAs.</text>
</comment>
<comment type="catalytic activity">
    <reaction evidence="1">
        <text>pseudouridine(54) in tRNA + S-adenosyl-L-methionine = N(1)-methylpseudouridine(54) in tRNA + S-adenosyl-L-homocysteine + H(+)</text>
        <dbReference type="Rhea" id="RHEA:55292"/>
        <dbReference type="Rhea" id="RHEA-COMP:14140"/>
        <dbReference type="Rhea" id="RHEA-COMP:14141"/>
        <dbReference type="ChEBI" id="CHEBI:15378"/>
        <dbReference type="ChEBI" id="CHEBI:57856"/>
        <dbReference type="ChEBI" id="CHEBI:59789"/>
        <dbReference type="ChEBI" id="CHEBI:65314"/>
        <dbReference type="ChEBI" id="CHEBI:74890"/>
        <dbReference type="EC" id="2.1.1.257"/>
    </reaction>
</comment>
<comment type="subunit">
    <text evidence="1">Homodimer.</text>
</comment>
<comment type="subcellular location">
    <subcellularLocation>
        <location evidence="1">Cytoplasm</location>
    </subcellularLocation>
</comment>
<comment type="similarity">
    <text evidence="1">Belongs to the methyltransferase superfamily. TrmY family.</text>
</comment>
<sequence>MRDIVIIGHKAKTSGDFSLNDLPGSAGRMDILCRCVSSALFLSFGMRRDVNVHLLLLGEPDPGKIIRFEGLHLRYLNPDERSSGSLIQKALLKNAAGQDIRSTPGVWTRTGDLNSLLASFEGRTLLYLREDGKDFREIAREIQDPVFILGDHTGVTEEEEKQLLEAGAQVISVGPISLHSNHCITLIHNELDRAEAERGEIPGGNISRPED</sequence>
<organism>
    <name type="scientific">Methanosarcina mazei (strain ATCC BAA-159 / DSM 3647 / Goe1 / Go1 / JCM 11833 / OCM 88)</name>
    <name type="common">Methanosarcina frisia</name>
    <dbReference type="NCBI Taxonomy" id="192952"/>
    <lineage>
        <taxon>Archaea</taxon>
        <taxon>Methanobacteriati</taxon>
        <taxon>Methanobacteriota</taxon>
        <taxon>Stenosarchaea group</taxon>
        <taxon>Methanomicrobia</taxon>
        <taxon>Methanosarcinales</taxon>
        <taxon>Methanosarcinaceae</taxon>
        <taxon>Methanosarcina</taxon>
    </lineage>
</organism>
<accession>Q8PU23</accession>
<evidence type="ECO:0000255" key="1">
    <source>
        <dbReference type="HAMAP-Rule" id="MF_00587"/>
    </source>
</evidence>
<name>TRMY_METMA</name>
<reference key="1">
    <citation type="journal article" date="2002" name="J. Mol. Microbiol. Biotechnol.">
        <title>The genome of Methanosarcina mazei: evidence for lateral gene transfer between Bacteria and Archaea.</title>
        <authorList>
            <person name="Deppenmeier U."/>
            <person name="Johann A."/>
            <person name="Hartsch T."/>
            <person name="Merkl R."/>
            <person name="Schmitz R.A."/>
            <person name="Martinez-Arias R."/>
            <person name="Henne A."/>
            <person name="Wiezer A."/>
            <person name="Baeumer S."/>
            <person name="Jacobi C."/>
            <person name="Brueggemann H."/>
            <person name="Lienard T."/>
            <person name="Christmann A."/>
            <person name="Boemecke M."/>
            <person name="Steckel S."/>
            <person name="Bhattacharyya A."/>
            <person name="Lykidis A."/>
            <person name="Overbeek R."/>
            <person name="Klenk H.-P."/>
            <person name="Gunsalus R.P."/>
            <person name="Fritz H.-J."/>
            <person name="Gottschalk G."/>
        </authorList>
    </citation>
    <scope>NUCLEOTIDE SEQUENCE [LARGE SCALE GENOMIC DNA]</scope>
    <source>
        <strain>ATCC BAA-159 / DSM 3647 / Goe1 / Go1 / JCM 11833 / OCM 88</strain>
    </source>
</reference>